<dbReference type="EC" id="6.1.1.5" evidence="1"/>
<dbReference type="EMBL" id="CP000679">
    <property type="protein sequence ID" value="ABP67497.1"/>
    <property type="molecule type" value="Genomic_DNA"/>
</dbReference>
<dbReference type="RefSeq" id="WP_011917433.1">
    <property type="nucleotide sequence ID" value="NC_009437.1"/>
</dbReference>
<dbReference type="SMR" id="A4XKR2"/>
<dbReference type="STRING" id="351627.Csac_1912"/>
<dbReference type="KEGG" id="csc:Csac_1912"/>
<dbReference type="eggNOG" id="COG0060">
    <property type="taxonomic scope" value="Bacteria"/>
</dbReference>
<dbReference type="HOGENOM" id="CLU_001493_7_0_9"/>
<dbReference type="OrthoDB" id="9810365at2"/>
<dbReference type="Proteomes" id="UP000000256">
    <property type="component" value="Chromosome"/>
</dbReference>
<dbReference type="GO" id="GO:0005829">
    <property type="term" value="C:cytosol"/>
    <property type="evidence" value="ECO:0007669"/>
    <property type="project" value="TreeGrafter"/>
</dbReference>
<dbReference type="GO" id="GO:0002161">
    <property type="term" value="F:aminoacyl-tRNA deacylase activity"/>
    <property type="evidence" value="ECO:0007669"/>
    <property type="project" value="InterPro"/>
</dbReference>
<dbReference type="GO" id="GO:0005524">
    <property type="term" value="F:ATP binding"/>
    <property type="evidence" value="ECO:0007669"/>
    <property type="project" value="UniProtKB-UniRule"/>
</dbReference>
<dbReference type="GO" id="GO:0004822">
    <property type="term" value="F:isoleucine-tRNA ligase activity"/>
    <property type="evidence" value="ECO:0007669"/>
    <property type="project" value="UniProtKB-UniRule"/>
</dbReference>
<dbReference type="GO" id="GO:0000049">
    <property type="term" value="F:tRNA binding"/>
    <property type="evidence" value="ECO:0007669"/>
    <property type="project" value="InterPro"/>
</dbReference>
<dbReference type="GO" id="GO:0008270">
    <property type="term" value="F:zinc ion binding"/>
    <property type="evidence" value="ECO:0007669"/>
    <property type="project" value="UniProtKB-UniRule"/>
</dbReference>
<dbReference type="GO" id="GO:0006428">
    <property type="term" value="P:isoleucyl-tRNA aminoacylation"/>
    <property type="evidence" value="ECO:0007669"/>
    <property type="project" value="UniProtKB-UniRule"/>
</dbReference>
<dbReference type="CDD" id="cd07960">
    <property type="entry name" value="Anticodon_Ia_Ile_BEm"/>
    <property type="match status" value="1"/>
</dbReference>
<dbReference type="CDD" id="cd00818">
    <property type="entry name" value="IleRS_core"/>
    <property type="match status" value="1"/>
</dbReference>
<dbReference type="FunFam" id="1.10.730.20:FF:000001">
    <property type="entry name" value="Isoleucine--tRNA ligase"/>
    <property type="match status" value="1"/>
</dbReference>
<dbReference type="FunFam" id="3.40.50.620:FF:000152">
    <property type="entry name" value="Isoleucine--tRNA ligase"/>
    <property type="match status" value="1"/>
</dbReference>
<dbReference type="Gene3D" id="1.10.730.20">
    <property type="match status" value="1"/>
</dbReference>
<dbReference type="Gene3D" id="3.40.50.620">
    <property type="entry name" value="HUPs"/>
    <property type="match status" value="2"/>
</dbReference>
<dbReference type="Gene3D" id="1.10.10.830">
    <property type="entry name" value="Ile-tRNA synthetase CP2 domain-like"/>
    <property type="match status" value="1"/>
</dbReference>
<dbReference type="HAMAP" id="MF_02002">
    <property type="entry name" value="Ile_tRNA_synth_type1"/>
    <property type="match status" value="1"/>
</dbReference>
<dbReference type="InterPro" id="IPR001412">
    <property type="entry name" value="aa-tRNA-synth_I_CS"/>
</dbReference>
<dbReference type="InterPro" id="IPR002300">
    <property type="entry name" value="aa-tRNA-synth_Ia"/>
</dbReference>
<dbReference type="InterPro" id="IPR033708">
    <property type="entry name" value="Anticodon_Ile_BEm"/>
</dbReference>
<dbReference type="InterPro" id="IPR002301">
    <property type="entry name" value="Ile-tRNA-ligase"/>
</dbReference>
<dbReference type="InterPro" id="IPR023585">
    <property type="entry name" value="Ile-tRNA-ligase_type1"/>
</dbReference>
<dbReference type="InterPro" id="IPR050081">
    <property type="entry name" value="Ile-tRNA_ligase"/>
</dbReference>
<dbReference type="InterPro" id="IPR013155">
    <property type="entry name" value="M/V/L/I-tRNA-synth_anticd-bd"/>
</dbReference>
<dbReference type="InterPro" id="IPR014729">
    <property type="entry name" value="Rossmann-like_a/b/a_fold"/>
</dbReference>
<dbReference type="InterPro" id="IPR009080">
    <property type="entry name" value="tRNAsynth_Ia_anticodon-bd"/>
</dbReference>
<dbReference type="InterPro" id="IPR009008">
    <property type="entry name" value="Val/Leu/Ile-tRNA-synth_edit"/>
</dbReference>
<dbReference type="InterPro" id="IPR010663">
    <property type="entry name" value="Znf_FPG/IleRS"/>
</dbReference>
<dbReference type="NCBIfam" id="TIGR00392">
    <property type="entry name" value="ileS"/>
    <property type="match status" value="1"/>
</dbReference>
<dbReference type="PANTHER" id="PTHR42765:SF1">
    <property type="entry name" value="ISOLEUCINE--TRNA LIGASE, MITOCHONDRIAL"/>
    <property type="match status" value="1"/>
</dbReference>
<dbReference type="PANTHER" id="PTHR42765">
    <property type="entry name" value="SOLEUCYL-TRNA SYNTHETASE"/>
    <property type="match status" value="1"/>
</dbReference>
<dbReference type="Pfam" id="PF08264">
    <property type="entry name" value="Anticodon_1"/>
    <property type="match status" value="1"/>
</dbReference>
<dbReference type="Pfam" id="PF00133">
    <property type="entry name" value="tRNA-synt_1"/>
    <property type="match status" value="1"/>
</dbReference>
<dbReference type="Pfam" id="PF06827">
    <property type="entry name" value="zf-FPG_IleRS"/>
    <property type="match status" value="1"/>
</dbReference>
<dbReference type="PRINTS" id="PR00984">
    <property type="entry name" value="TRNASYNTHILE"/>
</dbReference>
<dbReference type="SUPFAM" id="SSF47323">
    <property type="entry name" value="Anticodon-binding domain of a subclass of class I aminoacyl-tRNA synthetases"/>
    <property type="match status" value="1"/>
</dbReference>
<dbReference type="SUPFAM" id="SSF52374">
    <property type="entry name" value="Nucleotidylyl transferase"/>
    <property type="match status" value="1"/>
</dbReference>
<dbReference type="SUPFAM" id="SSF50677">
    <property type="entry name" value="ValRS/IleRS/LeuRS editing domain"/>
    <property type="match status" value="1"/>
</dbReference>
<dbReference type="PROSITE" id="PS00178">
    <property type="entry name" value="AA_TRNA_LIGASE_I"/>
    <property type="match status" value="1"/>
</dbReference>
<proteinExistence type="inferred from homology"/>
<name>SYI_CALS8</name>
<reference key="1">
    <citation type="submission" date="2007-04" db="EMBL/GenBank/DDBJ databases">
        <title>Genome sequence of the thermophilic hydrogen-producing bacterium Caldicellulosiruptor saccharolyticus DSM 8903.</title>
        <authorList>
            <person name="Copeland A."/>
            <person name="Lucas S."/>
            <person name="Lapidus A."/>
            <person name="Barry K."/>
            <person name="Detter J.C."/>
            <person name="Glavina del Rio T."/>
            <person name="Hammon N."/>
            <person name="Israni S."/>
            <person name="Dalin E."/>
            <person name="Tice H."/>
            <person name="Pitluck S."/>
            <person name="Kiss H."/>
            <person name="Brettin T."/>
            <person name="Bruce D."/>
            <person name="Han C."/>
            <person name="Schmutz J."/>
            <person name="Larimer F."/>
            <person name="Land M."/>
            <person name="Hauser L."/>
            <person name="Kyrpides N."/>
            <person name="Lykidis A."/>
            <person name="van de Werken H.J.G."/>
            <person name="Verhaart M.R.A."/>
            <person name="VanFossen A.L."/>
            <person name="Lewis D.L."/>
            <person name="Nichols J.D."/>
            <person name="Goorissen H.P."/>
            <person name="van Niel E.W.J."/>
            <person name="Stams F.J.M."/>
            <person name="Willquist K.U."/>
            <person name="Ward D.E."/>
            <person name="van der Oost J."/>
            <person name="Kelly R.M."/>
            <person name="Kengen S.M.W."/>
            <person name="Richardson P."/>
        </authorList>
    </citation>
    <scope>NUCLEOTIDE SEQUENCE [LARGE SCALE GENOMIC DNA]</scope>
    <source>
        <strain>ATCC 43494 / DSM 8903 / Tp8T 6331</strain>
    </source>
</reference>
<keyword id="KW-0030">Aminoacyl-tRNA synthetase</keyword>
<keyword id="KW-0067">ATP-binding</keyword>
<keyword id="KW-0963">Cytoplasm</keyword>
<keyword id="KW-0436">Ligase</keyword>
<keyword id="KW-0479">Metal-binding</keyword>
<keyword id="KW-0547">Nucleotide-binding</keyword>
<keyword id="KW-0648">Protein biosynthesis</keyword>
<keyword id="KW-0862">Zinc</keyword>
<gene>
    <name evidence="1" type="primary">ileS</name>
    <name type="ordered locus">Csac_1912</name>
</gene>
<comment type="function">
    <text evidence="1">Catalyzes the attachment of isoleucine to tRNA(Ile). As IleRS can inadvertently accommodate and process structurally similar amino acids such as valine, to avoid such errors it has two additional distinct tRNA(Ile)-dependent editing activities. One activity is designated as 'pretransfer' editing and involves the hydrolysis of activated Val-AMP. The other activity is designated 'posttransfer' editing and involves deacylation of mischarged Val-tRNA(Ile).</text>
</comment>
<comment type="catalytic activity">
    <reaction evidence="1">
        <text>tRNA(Ile) + L-isoleucine + ATP = L-isoleucyl-tRNA(Ile) + AMP + diphosphate</text>
        <dbReference type="Rhea" id="RHEA:11060"/>
        <dbReference type="Rhea" id="RHEA-COMP:9666"/>
        <dbReference type="Rhea" id="RHEA-COMP:9695"/>
        <dbReference type="ChEBI" id="CHEBI:30616"/>
        <dbReference type="ChEBI" id="CHEBI:33019"/>
        <dbReference type="ChEBI" id="CHEBI:58045"/>
        <dbReference type="ChEBI" id="CHEBI:78442"/>
        <dbReference type="ChEBI" id="CHEBI:78528"/>
        <dbReference type="ChEBI" id="CHEBI:456215"/>
        <dbReference type="EC" id="6.1.1.5"/>
    </reaction>
</comment>
<comment type="cofactor">
    <cofactor evidence="1">
        <name>Zn(2+)</name>
        <dbReference type="ChEBI" id="CHEBI:29105"/>
    </cofactor>
    <text evidence="1">Binds 1 zinc ion per subunit.</text>
</comment>
<comment type="subunit">
    <text evidence="1">Monomer.</text>
</comment>
<comment type="subcellular location">
    <subcellularLocation>
        <location evidence="1">Cytoplasm</location>
    </subcellularLocation>
</comment>
<comment type="domain">
    <text evidence="1">IleRS has two distinct active sites: one for aminoacylation and one for editing. The misactivated valine is translocated from the active site to the editing site, which sterically excludes the correctly activated isoleucine. The single editing site contains two valyl binding pockets, one specific for each substrate (Val-AMP or Val-tRNA(Ile)).</text>
</comment>
<comment type="similarity">
    <text evidence="1">Belongs to the class-I aminoacyl-tRNA synthetase family. IleS type 1 subfamily.</text>
</comment>
<evidence type="ECO:0000255" key="1">
    <source>
        <dbReference type="HAMAP-Rule" id="MF_02002"/>
    </source>
</evidence>
<feature type="chain" id="PRO_1000022052" description="Isoleucine--tRNA ligase">
    <location>
        <begin position="1"/>
        <end position="920"/>
    </location>
</feature>
<feature type="short sequence motif" description="'HIGH' region">
    <location>
        <begin position="57"/>
        <end position="67"/>
    </location>
</feature>
<feature type="short sequence motif" description="'KMSKS' region">
    <location>
        <begin position="601"/>
        <end position="605"/>
    </location>
</feature>
<feature type="binding site" evidence="1">
    <location>
        <position position="560"/>
    </location>
    <ligand>
        <name>L-isoleucyl-5'-AMP</name>
        <dbReference type="ChEBI" id="CHEBI:178002"/>
    </ligand>
</feature>
<feature type="binding site" evidence="1">
    <location>
        <position position="604"/>
    </location>
    <ligand>
        <name>ATP</name>
        <dbReference type="ChEBI" id="CHEBI:30616"/>
    </ligand>
</feature>
<feature type="binding site" evidence="1">
    <location>
        <position position="890"/>
    </location>
    <ligand>
        <name>Zn(2+)</name>
        <dbReference type="ChEBI" id="CHEBI:29105"/>
    </ligand>
</feature>
<feature type="binding site" evidence="1">
    <location>
        <position position="893"/>
    </location>
    <ligand>
        <name>Zn(2+)</name>
        <dbReference type="ChEBI" id="CHEBI:29105"/>
    </ligand>
</feature>
<feature type="binding site" evidence="1">
    <location>
        <position position="910"/>
    </location>
    <ligand>
        <name>Zn(2+)</name>
        <dbReference type="ChEBI" id="CHEBI:29105"/>
    </ligand>
</feature>
<feature type="binding site" evidence="1">
    <location>
        <position position="913"/>
    </location>
    <ligand>
        <name>Zn(2+)</name>
        <dbReference type="ChEBI" id="CHEBI:29105"/>
    </ligand>
</feature>
<sequence>MDWSQTLNLPKTDFPMRANLAQREPQFLRFWEENDIFKKMLKKNRNNKKFILHDGPPYANGDIHLGHALNKVLKDIVNKYKSLQGYYTPYIPGWDTHGLPIEQQVIKKLGVNRHEVDPVEFRKKCKEFALSYIDIQRQQFKRLGVFGEWEDPYMTLDPKFEARQIRVFGEMAKKGYIYKGLKPVYWCPSCETALAEAEIEYQEDKTYSIYVKFEVIDDKGLFANLNLSGKKVYIVIWTTTTWTLPGNLAIALNTDFDYSLVDVGNEILIVASELVERVMKTNKIDQYHEIARFKGKDLEYVKCKHPFLDRTSLVILGEHVTLEAGTGCVHTAPGHGEEDFEVCERYNIPVIVPVDNKGYLTQEAGKFAGLFYEDSNKEIAKELEASDHLLGVEKITHQYPHCWRCKNPVIFRATEQWFASVKGFREEALKAVDDVKWVPEWGRDRIYNMIADRQDWCISRQRIWGVPIPIFYCKNCRKELITDETIDHIAKIFEKEGSDAWFSKDVKELLPEGTKCPVCGCMEFEKETDIMDVWFDSGSSHAYVLESREDLEWPCDMYLEGNDQYRGWFQSSLLTAVATKGRAPYRIVLTHGFVVDGEGKKMSKSEGNVISPFDIINEFGADILRLWCVSADYTTDMRISKDIIKQLTEIYRKIRNTARFLLGNLYDFNPKTDKVGCENLKEIDKWALQRLYKLIEKVTKAYEEYDYNQVYHLVHNFCVIDMSNLYLDINKDRLYASKSESLDRRSAQTVMYEILVALTKLIAPILSFTAEEIWQNIIFKEEDAESVFLTSWPKVNENILKDETLEEKWNKIIEIKDIVAKQLEIARNEKLIGSSLDSKVKIFAKGNIKRFIEENKDIIQEVLIVSQLEVEEGDSDQIKVEVYKADGLKCERCWKFDTMVGKNEENLNVCPRCYEVVKVK</sequence>
<accession>A4XKR2</accession>
<organism>
    <name type="scientific">Caldicellulosiruptor saccharolyticus (strain ATCC 43494 / DSM 8903 / Tp8T 6331)</name>
    <dbReference type="NCBI Taxonomy" id="351627"/>
    <lineage>
        <taxon>Bacteria</taxon>
        <taxon>Bacillati</taxon>
        <taxon>Bacillota</taxon>
        <taxon>Bacillota incertae sedis</taxon>
        <taxon>Caldicellulosiruptorales</taxon>
        <taxon>Caldicellulosiruptoraceae</taxon>
        <taxon>Caldicellulosiruptor</taxon>
    </lineage>
</organism>
<protein>
    <recommendedName>
        <fullName evidence="1">Isoleucine--tRNA ligase</fullName>
        <ecNumber evidence="1">6.1.1.5</ecNumber>
    </recommendedName>
    <alternativeName>
        <fullName evidence="1">Isoleucyl-tRNA synthetase</fullName>
        <shortName evidence="1">IleRS</shortName>
    </alternativeName>
</protein>